<name>URM1_DROER</name>
<dbReference type="EMBL" id="CH954178">
    <property type="protein sequence ID" value="EDV50444.1"/>
    <property type="status" value="ALT_INIT"/>
    <property type="molecule type" value="Genomic_DNA"/>
</dbReference>
<dbReference type="RefSeq" id="XP_001971418.2">
    <property type="nucleotide sequence ID" value="XM_001971382.2"/>
</dbReference>
<dbReference type="SMR" id="B3NFA2"/>
<dbReference type="EnsemblMetazoa" id="FBtr0135001">
    <property type="protein sequence ID" value="FBpp0133493"/>
    <property type="gene ID" value="FBgn0107201"/>
</dbReference>
<dbReference type="EnsemblMetazoa" id="XM_001971382.3">
    <property type="protein sequence ID" value="XP_001971418.3"/>
    <property type="gene ID" value="LOC6544124"/>
</dbReference>
<dbReference type="GeneID" id="6544124"/>
<dbReference type="KEGG" id="der:6544124"/>
<dbReference type="CTD" id="81605"/>
<dbReference type="eggNOG" id="KOG4146">
    <property type="taxonomic scope" value="Eukaryota"/>
</dbReference>
<dbReference type="OrthoDB" id="10248987at2759"/>
<dbReference type="UniPathway" id="UPA00988"/>
<dbReference type="Proteomes" id="UP000008711">
    <property type="component" value="Unassembled WGS sequence"/>
</dbReference>
<dbReference type="GO" id="GO:0005829">
    <property type="term" value="C:cytosol"/>
    <property type="evidence" value="ECO:0007669"/>
    <property type="project" value="UniProtKB-UniRule"/>
</dbReference>
<dbReference type="GO" id="GO:0046329">
    <property type="term" value="P:negative regulation of JNK cascade"/>
    <property type="evidence" value="ECO:0007669"/>
    <property type="project" value="EnsemblMetazoa"/>
</dbReference>
<dbReference type="GO" id="GO:0032447">
    <property type="term" value="P:protein urmylation"/>
    <property type="evidence" value="ECO:0007669"/>
    <property type="project" value="UniProtKB-UniRule"/>
</dbReference>
<dbReference type="GO" id="GO:0034227">
    <property type="term" value="P:tRNA thio-modification"/>
    <property type="evidence" value="ECO:0007669"/>
    <property type="project" value="UniProtKB-UniRule"/>
</dbReference>
<dbReference type="GO" id="GO:0002098">
    <property type="term" value="P:tRNA wobble uridine modification"/>
    <property type="evidence" value="ECO:0007669"/>
    <property type="project" value="UniProtKB-UniRule"/>
</dbReference>
<dbReference type="CDD" id="cd01764">
    <property type="entry name" value="Ubl_Urm1"/>
    <property type="match status" value="1"/>
</dbReference>
<dbReference type="FunFam" id="3.10.20.30:FF:000021">
    <property type="entry name" value="Ubiquitin-related modifier 1"/>
    <property type="match status" value="1"/>
</dbReference>
<dbReference type="Gene3D" id="3.10.20.30">
    <property type="match status" value="1"/>
</dbReference>
<dbReference type="HAMAP" id="MF_03048">
    <property type="entry name" value="Urm1"/>
    <property type="match status" value="1"/>
</dbReference>
<dbReference type="InterPro" id="IPR012675">
    <property type="entry name" value="Beta-grasp_dom_sf"/>
</dbReference>
<dbReference type="InterPro" id="IPR016155">
    <property type="entry name" value="Mopterin_synth/thiamin_S_b"/>
</dbReference>
<dbReference type="InterPro" id="IPR015221">
    <property type="entry name" value="Urm1"/>
</dbReference>
<dbReference type="PANTHER" id="PTHR14986">
    <property type="entry name" value="RURM1 PROTEIN"/>
    <property type="match status" value="1"/>
</dbReference>
<dbReference type="Pfam" id="PF09138">
    <property type="entry name" value="Urm1"/>
    <property type="match status" value="1"/>
</dbReference>
<dbReference type="PIRSF" id="PIRSF037379">
    <property type="entry name" value="Ubiquitin-related_modifier_1"/>
    <property type="match status" value="1"/>
</dbReference>
<dbReference type="SUPFAM" id="SSF54285">
    <property type="entry name" value="MoaD/ThiS"/>
    <property type="match status" value="1"/>
</dbReference>
<organism>
    <name type="scientific">Drosophila erecta</name>
    <name type="common">Fruit fly</name>
    <dbReference type="NCBI Taxonomy" id="7220"/>
    <lineage>
        <taxon>Eukaryota</taxon>
        <taxon>Metazoa</taxon>
        <taxon>Ecdysozoa</taxon>
        <taxon>Arthropoda</taxon>
        <taxon>Hexapoda</taxon>
        <taxon>Insecta</taxon>
        <taxon>Pterygota</taxon>
        <taxon>Neoptera</taxon>
        <taxon>Endopterygota</taxon>
        <taxon>Diptera</taxon>
        <taxon>Brachycera</taxon>
        <taxon>Muscomorpha</taxon>
        <taxon>Ephydroidea</taxon>
        <taxon>Drosophilidae</taxon>
        <taxon>Drosophila</taxon>
        <taxon>Sophophora</taxon>
    </lineage>
</organism>
<evidence type="ECO:0000250" key="1">
    <source>
        <dbReference type="UniProtKB" id="Q7KU86"/>
    </source>
</evidence>
<evidence type="ECO:0000255" key="2">
    <source>
        <dbReference type="HAMAP-Rule" id="MF_03048"/>
    </source>
</evidence>
<evidence type="ECO:0000305" key="3"/>
<reference key="1">
    <citation type="journal article" date="2007" name="Nature">
        <title>Evolution of genes and genomes on the Drosophila phylogeny.</title>
        <authorList>
            <consortium name="Drosophila 12 genomes consortium"/>
        </authorList>
    </citation>
    <scope>NUCLEOTIDE SEQUENCE [LARGE SCALE GENOMIC DNA]</scope>
    <source>
        <strain>Tucson 14021-0224.01</strain>
    </source>
</reference>
<keyword id="KW-0963">Cytoplasm</keyword>
<keyword id="KW-1017">Isopeptide bond</keyword>
<keyword id="KW-0819">tRNA processing</keyword>
<keyword id="KW-0833">Ubl conjugation pathway</keyword>
<comment type="function">
    <text evidence="2">Acts as a sulfur carrier required for 2-thiolation of mcm(5)S(2)U at tRNA wobble positions of cytosolic tRNA(Lys), tRNA(Glu) and tRNA(Gln). Serves as sulfur donor in tRNA 2-thiolation reaction by being thiocarboxylated (-COSH) at its C-terminus by MOCS3. The sulfur is then transferred to tRNA to form 2-thiolation of mcm(5)S(2)U. Also acts as a ubiquitin-like protein (UBL) that is covalently conjugated via an isopeptide bond to lysine residues of target proteins such as Prx2/Jafrac1, Ciao1, Eip71CD and GILT1. The thiocarboxylated form serves as substrate for conjugation and oxidative stress specifically induces the formation of UBL-protein conjugates.</text>
</comment>
<comment type="pathway">
    <text evidence="2">tRNA modification; 5-methoxycarbonylmethyl-2-thiouridine-tRNA biosynthesis.</text>
</comment>
<comment type="subunit">
    <text evidence="1">Interacts with cer.</text>
</comment>
<comment type="subcellular location">
    <subcellularLocation>
        <location evidence="2">Cytoplasm</location>
    </subcellularLocation>
</comment>
<comment type="PTM">
    <text evidence="2">C-terminal thiocarboxylation occurs in 2 steps, it is first acyl-adenylated (-COAMP) via the hesA/moeB/thiF part of the MOCS3 homolog, then thiocarboxylated (-COSH) via the rhodanese domain of the MOCS3 homolog.</text>
</comment>
<comment type="similarity">
    <text evidence="2">Belongs to the URM1 family.</text>
</comment>
<comment type="sequence caution" evidence="3">
    <conflict type="erroneous initiation">
        <sequence resource="EMBL-CDS" id="EDV50444"/>
    </conflict>
</comment>
<feature type="chain" id="PRO_0000367856" description="Ubiquitin-related modifier 1 homolog">
    <location>
        <begin position="1"/>
        <end position="101"/>
    </location>
</feature>
<feature type="modified residue" description="1-thioglycine" evidence="2">
    <location>
        <position position="101"/>
    </location>
</feature>
<feature type="cross-link" description="Glycyl lysine isopeptide (Gly-Lys) (interchain with K-? in acceptor proteins)" evidence="2">
    <location>
        <position position="101"/>
    </location>
</feature>
<protein>
    <recommendedName>
        <fullName evidence="2">Ubiquitin-related modifier 1 homolog</fullName>
    </recommendedName>
</protein>
<sequence>MGTPELKIILEFSAGAELLFGNIKRRELALDGNQKWTIANLLKWMHANILTERPELFLQGDTVRPGILVLINDTDWELLGELDYELQPNDNVLFISTLHGG</sequence>
<accession>B3NFA2</accession>
<gene>
    <name evidence="1" type="primary">Urm1</name>
    <name type="ORF">GG14947</name>
</gene>
<proteinExistence type="inferred from homology"/>